<proteinExistence type="inferred from homology"/>
<name>TADA_RICBR</name>
<accession>Q1RGK7</accession>
<sequence length="145" mass="16358">MREALKQAEIAFSKNEVPVGAVIVDRENQKIISKSYNNTEEKNNALYHAEIIAINEACRIISSKNLSDYDIYVTLEPCAMCAAAIAHSRLKRLFYGASDSKHGAVESNLRYFNSKACFHRPEIYSGIFAEDSALLMKGFFKKIRD</sequence>
<comment type="function">
    <text evidence="1">Catalyzes the deamination of adenosine to inosine at the wobble position 34 of tRNA(Arg2).</text>
</comment>
<comment type="catalytic activity">
    <reaction evidence="1">
        <text>adenosine(34) in tRNA + H2O + H(+) = inosine(34) in tRNA + NH4(+)</text>
        <dbReference type="Rhea" id="RHEA:43168"/>
        <dbReference type="Rhea" id="RHEA-COMP:10373"/>
        <dbReference type="Rhea" id="RHEA-COMP:10374"/>
        <dbReference type="ChEBI" id="CHEBI:15377"/>
        <dbReference type="ChEBI" id="CHEBI:15378"/>
        <dbReference type="ChEBI" id="CHEBI:28938"/>
        <dbReference type="ChEBI" id="CHEBI:74411"/>
        <dbReference type="ChEBI" id="CHEBI:82852"/>
        <dbReference type="EC" id="3.5.4.33"/>
    </reaction>
</comment>
<comment type="cofactor">
    <cofactor evidence="1">
        <name>Zn(2+)</name>
        <dbReference type="ChEBI" id="CHEBI:29105"/>
    </cofactor>
    <text evidence="1">Binds 1 zinc ion per subunit.</text>
</comment>
<comment type="subunit">
    <text evidence="1">Homodimer.</text>
</comment>
<comment type="similarity">
    <text evidence="1">Belongs to the cytidine and deoxycytidylate deaminase family.</text>
</comment>
<comment type="sequence caution" evidence="3">
    <conflict type="erroneous initiation">
        <sequence resource="EMBL-CDS" id="ABE05507"/>
    </conflict>
    <text>Extended N-terminus.</text>
</comment>
<gene>
    <name evidence="1" type="primary">tadA</name>
    <name type="ordered locus">RBE_1426</name>
</gene>
<organism>
    <name type="scientific">Rickettsia bellii (strain RML369-C)</name>
    <dbReference type="NCBI Taxonomy" id="336407"/>
    <lineage>
        <taxon>Bacteria</taxon>
        <taxon>Pseudomonadati</taxon>
        <taxon>Pseudomonadota</taxon>
        <taxon>Alphaproteobacteria</taxon>
        <taxon>Rickettsiales</taxon>
        <taxon>Rickettsiaceae</taxon>
        <taxon>Rickettsieae</taxon>
        <taxon>Rickettsia</taxon>
        <taxon>belli group</taxon>
    </lineage>
</organism>
<reference key="1">
    <citation type="journal article" date="2006" name="PLoS Genet.">
        <title>Genome sequence of Rickettsia bellii illuminates the role of amoebae in gene exchanges between intracellular pathogens.</title>
        <authorList>
            <person name="Ogata H."/>
            <person name="La Scola B."/>
            <person name="Audic S."/>
            <person name="Renesto P."/>
            <person name="Blanc G."/>
            <person name="Robert C."/>
            <person name="Fournier P.-E."/>
            <person name="Claverie J.-M."/>
            <person name="Raoult D."/>
        </authorList>
    </citation>
    <scope>NUCLEOTIDE SEQUENCE [LARGE SCALE GENOMIC DNA]</scope>
    <source>
        <strain>RML369-C</strain>
    </source>
</reference>
<keyword id="KW-0378">Hydrolase</keyword>
<keyword id="KW-0479">Metal-binding</keyword>
<keyword id="KW-0819">tRNA processing</keyword>
<keyword id="KW-0862">Zinc</keyword>
<dbReference type="EC" id="3.5.4.33" evidence="1"/>
<dbReference type="EMBL" id="CP000087">
    <property type="protein sequence ID" value="ABE05507.1"/>
    <property type="status" value="ALT_INIT"/>
    <property type="molecule type" value="Genomic_DNA"/>
</dbReference>
<dbReference type="SMR" id="Q1RGK7"/>
<dbReference type="KEGG" id="rbe:RBE_1426"/>
<dbReference type="eggNOG" id="COG0590">
    <property type="taxonomic scope" value="Bacteria"/>
</dbReference>
<dbReference type="HOGENOM" id="CLU_025810_3_2_5"/>
<dbReference type="Proteomes" id="UP000001951">
    <property type="component" value="Chromosome"/>
</dbReference>
<dbReference type="GO" id="GO:0052717">
    <property type="term" value="F:tRNA-specific adenosine-34 deaminase activity"/>
    <property type="evidence" value="ECO:0007669"/>
    <property type="project" value="UniProtKB-UniRule"/>
</dbReference>
<dbReference type="GO" id="GO:0008270">
    <property type="term" value="F:zinc ion binding"/>
    <property type="evidence" value="ECO:0007669"/>
    <property type="project" value="UniProtKB-UniRule"/>
</dbReference>
<dbReference type="GO" id="GO:0002100">
    <property type="term" value="P:tRNA wobble adenosine to inosine editing"/>
    <property type="evidence" value="ECO:0007669"/>
    <property type="project" value="UniProtKB-UniRule"/>
</dbReference>
<dbReference type="CDD" id="cd01285">
    <property type="entry name" value="nucleoside_deaminase"/>
    <property type="match status" value="1"/>
</dbReference>
<dbReference type="Gene3D" id="3.40.140.10">
    <property type="entry name" value="Cytidine Deaminase, domain 2"/>
    <property type="match status" value="1"/>
</dbReference>
<dbReference type="HAMAP" id="MF_00972">
    <property type="entry name" value="tRNA_aden_deaminase"/>
    <property type="match status" value="1"/>
</dbReference>
<dbReference type="InterPro" id="IPR016192">
    <property type="entry name" value="APOBEC/CMP_deaminase_Zn-bd"/>
</dbReference>
<dbReference type="InterPro" id="IPR002125">
    <property type="entry name" value="CMP_dCMP_dom"/>
</dbReference>
<dbReference type="InterPro" id="IPR016193">
    <property type="entry name" value="Cytidine_deaminase-like"/>
</dbReference>
<dbReference type="InterPro" id="IPR028883">
    <property type="entry name" value="tRNA_aden_deaminase"/>
</dbReference>
<dbReference type="PANTHER" id="PTHR11079">
    <property type="entry name" value="CYTOSINE DEAMINASE FAMILY MEMBER"/>
    <property type="match status" value="1"/>
</dbReference>
<dbReference type="PANTHER" id="PTHR11079:SF179">
    <property type="entry name" value="TRNA(ADENINE(34)) DEAMINASE, CHLOROPLASTIC"/>
    <property type="match status" value="1"/>
</dbReference>
<dbReference type="Pfam" id="PF14437">
    <property type="entry name" value="MafB19-deam"/>
    <property type="match status" value="1"/>
</dbReference>
<dbReference type="SUPFAM" id="SSF53927">
    <property type="entry name" value="Cytidine deaminase-like"/>
    <property type="match status" value="1"/>
</dbReference>
<dbReference type="PROSITE" id="PS00903">
    <property type="entry name" value="CYT_DCMP_DEAMINASES_1"/>
    <property type="match status" value="1"/>
</dbReference>
<dbReference type="PROSITE" id="PS51747">
    <property type="entry name" value="CYT_DCMP_DEAMINASES_2"/>
    <property type="match status" value="1"/>
</dbReference>
<evidence type="ECO:0000255" key="1">
    <source>
        <dbReference type="HAMAP-Rule" id="MF_00972"/>
    </source>
</evidence>
<evidence type="ECO:0000255" key="2">
    <source>
        <dbReference type="PROSITE-ProRule" id="PRU01083"/>
    </source>
</evidence>
<evidence type="ECO:0000305" key="3"/>
<protein>
    <recommendedName>
        <fullName evidence="1">tRNA-specific adenosine deaminase</fullName>
        <ecNumber evidence="1">3.5.4.33</ecNumber>
    </recommendedName>
</protein>
<feature type="chain" id="PRO_0000293135" description="tRNA-specific adenosine deaminase">
    <location>
        <begin position="1"/>
        <end position="145"/>
    </location>
</feature>
<feature type="domain" description="CMP/dCMP-type deaminase" evidence="2">
    <location>
        <begin position="1"/>
        <end position="116"/>
    </location>
</feature>
<feature type="active site" description="Proton donor" evidence="1">
    <location>
        <position position="50"/>
    </location>
</feature>
<feature type="binding site" evidence="1">
    <location>
        <position position="48"/>
    </location>
    <ligand>
        <name>Zn(2+)</name>
        <dbReference type="ChEBI" id="CHEBI:29105"/>
        <note>catalytic</note>
    </ligand>
</feature>
<feature type="binding site" evidence="1">
    <location>
        <position position="78"/>
    </location>
    <ligand>
        <name>Zn(2+)</name>
        <dbReference type="ChEBI" id="CHEBI:29105"/>
        <note>catalytic</note>
    </ligand>
</feature>
<feature type="binding site" evidence="1">
    <location>
        <position position="81"/>
    </location>
    <ligand>
        <name>Zn(2+)</name>
        <dbReference type="ChEBI" id="CHEBI:29105"/>
        <note>catalytic</note>
    </ligand>
</feature>